<reference key="1">
    <citation type="journal article" date="2005" name="Science">
        <title>The genome of the basidiomycetous yeast and human pathogen Cryptococcus neoformans.</title>
        <authorList>
            <person name="Loftus B.J."/>
            <person name="Fung E."/>
            <person name="Roncaglia P."/>
            <person name="Rowley D."/>
            <person name="Amedeo P."/>
            <person name="Bruno D."/>
            <person name="Vamathevan J."/>
            <person name="Miranda M."/>
            <person name="Anderson I.J."/>
            <person name="Fraser J.A."/>
            <person name="Allen J.E."/>
            <person name="Bosdet I.E."/>
            <person name="Brent M.R."/>
            <person name="Chiu R."/>
            <person name="Doering T.L."/>
            <person name="Donlin M.J."/>
            <person name="D'Souza C.A."/>
            <person name="Fox D.S."/>
            <person name="Grinberg V."/>
            <person name="Fu J."/>
            <person name="Fukushima M."/>
            <person name="Haas B.J."/>
            <person name="Huang J.C."/>
            <person name="Janbon G."/>
            <person name="Jones S.J.M."/>
            <person name="Koo H.L."/>
            <person name="Krzywinski M.I."/>
            <person name="Kwon-Chung K.J."/>
            <person name="Lengeler K.B."/>
            <person name="Maiti R."/>
            <person name="Marra M.A."/>
            <person name="Marra R.E."/>
            <person name="Mathewson C.A."/>
            <person name="Mitchell T.G."/>
            <person name="Pertea M."/>
            <person name="Riggs F.R."/>
            <person name="Salzberg S.L."/>
            <person name="Schein J.E."/>
            <person name="Shvartsbeyn A."/>
            <person name="Shin H."/>
            <person name="Shumway M."/>
            <person name="Specht C.A."/>
            <person name="Suh B.B."/>
            <person name="Tenney A."/>
            <person name="Utterback T.R."/>
            <person name="Wickes B.L."/>
            <person name="Wortman J.R."/>
            <person name="Wye N.H."/>
            <person name="Kronstad J.W."/>
            <person name="Lodge J.K."/>
            <person name="Heitman J."/>
            <person name="Davis R.W."/>
            <person name="Fraser C.M."/>
            <person name="Hyman R.W."/>
        </authorList>
    </citation>
    <scope>NUCLEOTIDE SEQUENCE [LARGE SCALE GENOMIC DNA]</scope>
    <source>
        <strain>JEC21 / ATCC MYA-565</strain>
    </source>
</reference>
<keyword id="KW-0342">GTP-binding</keyword>
<keyword id="KW-0378">Hydrolase</keyword>
<keyword id="KW-0547">Nucleotide-binding</keyword>
<keyword id="KW-1185">Reference proteome</keyword>
<protein>
    <recommendedName>
        <fullName evidence="1">GPN-loop GTPase 3</fullName>
    </recommendedName>
</protein>
<name>GPN3_CRYNJ</name>
<accession>P0CN94</accession>
<accession>Q55YA6</accession>
<accession>Q5KLN2</accession>
<evidence type="ECO:0000250" key="1">
    <source>
        <dbReference type="UniProtKB" id="Q06543"/>
    </source>
</evidence>
<evidence type="ECO:0000250" key="2">
    <source>
        <dbReference type="UniProtKB" id="Q9UYR9"/>
    </source>
</evidence>
<evidence type="ECO:0000256" key="3">
    <source>
        <dbReference type="SAM" id="MobiDB-lite"/>
    </source>
</evidence>
<evidence type="ECO:0000305" key="4"/>
<comment type="function">
    <text evidence="1">Small GTPase required for proper nuclear import of RNA polymerase II and III (RNAPII and RNAPIII). May act at an RNAP assembly step prior to nuclear import.</text>
</comment>
<comment type="subunit">
    <text evidence="1">Heterodimers with GPN1 or GPN2. Binds to RNA polymerase II (RNAPII).</text>
</comment>
<comment type="similarity">
    <text evidence="4">Belongs to the GPN-loop GTPase family.</text>
</comment>
<organism>
    <name type="scientific">Cryptococcus neoformans var. neoformans serotype D (strain JEC21 / ATCC MYA-565)</name>
    <name type="common">Filobasidiella neoformans</name>
    <dbReference type="NCBI Taxonomy" id="214684"/>
    <lineage>
        <taxon>Eukaryota</taxon>
        <taxon>Fungi</taxon>
        <taxon>Dikarya</taxon>
        <taxon>Basidiomycota</taxon>
        <taxon>Agaricomycotina</taxon>
        <taxon>Tremellomycetes</taxon>
        <taxon>Tremellales</taxon>
        <taxon>Cryptococcaceae</taxon>
        <taxon>Cryptococcus</taxon>
        <taxon>Cryptococcus neoformans species complex</taxon>
    </lineage>
</organism>
<gene>
    <name type="ordered locus">CNB04680</name>
</gene>
<dbReference type="EMBL" id="AE017342">
    <property type="protein sequence ID" value="AAW41651.2"/>
    <property type="molecule type" value="Genomic_DNA"/>
</dbReference>
<dbReference type="RefSeq" id="XP_024512184.1">
    <property type="nucleotide sequence ID" value="XM_024656606.1"/>
</dbReference>
<dbReference type="RefSeq" id="XP_568958.1">
    <property type="nucleotide sequence ID" value="XM_568958.1"/>
</dbReference>
<dbReference type="SMR" id="P0CN94"/>
<dbReference type="FunCoup" id="P0CN94">
    <property type="interactions" value="665"/>
</dbReference>
<dbReference type="STRING" id="214684.P0CN94"/>
<dbReference type="PaxDb" id="214684-P0CN94"/>
<dbReference type="GeneID" id="3256045"/>
<dbReference type="eggNOG" id="KOG1534">
    <property type="taxonomic scope" value="Eukaryota"/>
</dbReference>
<dbReference type="HOGENOM" id="CLU_037460_0_0_1"/>
<dbReference type="InParanoid" id="P0CN94"/>
<dbReference type="Proteomes" id="UP000002149">
    <property type="component" value="Chromosome 2"/>
</dbReference>
<dbReference type="GO" id="GO:0005525">
    <property type="term" value="F:GTP binding"/>
    <property type="evidence" value="ECO:0007669"/>
    <property type="project" value="UniProtKB-KW"/>
</dbReference>
<dbReference type="GO" id="GO:0003924">
    <property type="term" value="F:GTPase activity"/>
    <property type="evidence" value="ECO:0000318"/>
    <property type="project" value="GO_Central"/>
</dbReference>
<dbReference type="GO" id="GO:0007064">
    <property type="term" value="P:mitotic sister chromatid cohesion"/>
    <property type="evidence" value="ECO:0007669"/>
    <property type="project" value="EnsemblFungi"/>
</dbReference>
<dbReference type="GO" id="GO:0006606">
    <property type="term" value="P:protein import into nucleus"/>
    <property type="evidence" value="ECO:0007669"/>
    <property type="project" value="EnsemblFungi"/>
</dbReference>
<dbReference type="CDD" id="cd17872">
    <property type="entry name" value="GPN3"/>
    <property type="match status" value="1"/>
</dbReference>
<dbReference type="FunFam" id="3.40.50.300:FF:000552">
    <property type="entry name" value="GPN-loop GTPase 3"/>
    <property type="match status" value="1"/>
</dbReference>
<dbReference type="Gene3D" id="3.40.50.300">
    <property type="entry name" value="P-loop containing nucleotide triphosphate hydrolases"/>
    <property type="match status" value="1"/>
</dbReference>
<dbReference type="InterPro" id="IPR004130">
    <property type="entry name" value="Gpn"/>
</dbReference>
<dbReference type="InterPro" id="IPR030228">
    <property type="entry name" value="Gpn3"/>
</dbReference>
<dbReference type="InterPro" id="IPR027417">
    <property type="entry name" value="P-loop_NTPase"/>
</dbReference>
<dbReference type="PANTHER" id="PTHR21231:SF7">
    <property type="entry name" value="GPN-LOOP GTPASE 3"/>
    <property type="match status" value="1"/>
</dbReference>
<dbReference type="PANTHER" id="PTHR21231">
    <property type="entry name" value="XPA-BINDING PROTEIN 1-RELATED"/>
    <property type="match status" value="1"/>
</dbReference>
<dbReference type="Pfam" id="PF03029">
    <property type="entry name" value="ATP_bind_1"/>
    <property type="match status" value="1"/>
</dbReference>
<dbReference type="SUPFAM" id="SSF52540">
    <property type="entry name" value="P-loop containing nucleoside triphosphate hydrolases"/>
    <property type="match status" value="1"/>
</dbReference>
<proteinExistence type="inferred from homology"/>
<feature type="chain" id="PRO_0000255590" description="GPN-loop GTPase 3">
    <location>
        <begin position="1"/>
        <end position="272"/>
    </location>
</feature>
<feature type="region of interest" description="Disordered" evidence="3">
    <location>
        <begin position="253"/>
        <end position="272"/>
    </location>
</feature>
<feature type="short sequence motif" description="Gly-Pro-Asn (GPN)-loop; involved in dimer interface" evidence="2">
    <location>
        <begin position="69"/>
        <end position="71"/>
    </location>
</feature>
<feature type="binding site" evidence="2">
    <location>
        <begin position="12"/>
        <end position="17"/>
    </location>
    <ligand>
        <name>GTP</name>
        <dbReference type="ChEBI" id="CHEBI:37565"/>
    </ligand>
</feature>
<feature type="binding site" evidence="2">
    <location>
        <begin position="172"/>
        <end position="175"/>
    </location>
    <ligand>
        <name>GTP</name>
        <dbReference type="ChEBI" id="CHEBI:37565"/>
    </ligand>
</feature>
<feature type="site" description="Stabilizes the phosphate intermediate; shared with dimeric partner" evidence="2">
    <location>
        <position position="71"/>
    </location>
</feature>
<sequence length="272" mass="30553">MRYAVLVTGPAGAGKSTFCASLITHAQTIGRSVHLVNLDPAADKFEYEPTIDIRDLINLEDVMEELEFGPNGGLIYCFEYLLNNLDWLEDELGAYEDDYLIIDCPGQIELYTHVPLLPRLATFLSTSLNFRTSAVYLIDSQFMQDKSKFFAGVMSAMSCMLSLGISMLCLMSKMDLVKDKKGRTKREVGRYLDPDPNLLLEDINQGTNSKFNQLNRAVVSLIEDQNIVSFLPLDVTSEDSVNTVLSHIDNMMQYGEDEEPKVPKDMDDGDFD</sequence>